<protein>
    <recommendedName>
        <fullName>Lipid II:glycine glycyltransferase</fullName>
        <ecNumber>2.3.2.16</ecNumber>
    </recommendedName>
    <alternativeName>
        <fullName>Factor essential for expression of methicillin resistance X</fullName>
    </alternativeName>
</protein>
<proteinExistence type="inferred from homology"/>
<name>FEMX_STAAR</name>
<gene>
    <name type="primary">femX</name>
    <name type="synonym">fmhB</name>
    <name type="ordered locus">SAR2346</name>
</gene>
<evidence type="ECO:0000250" key="1"/>
<evidence type="ECO:0000305" key="2"/>
<comment type="function">
    <text evidence="1">Catalyzes the incorporation of the first glycine of the pentaglycine interpeptide bridge, which is characteristic of the S.aureus peptidoglycan. This glycine is added to the epsilon-amino group of the L-lysine of the membrane-bound lipid II intermediate (GlcNAc-(beta-1,4)-N-acetylmuramic acid(-L-Ala-D-iGln-L-Lys-D-Ala-D-Ala)-pyrophosphoryl-undecaprenol), using glycyl-tRNA(Gly) as donor, in a ribosome-independent mechanism. Involved in methicillin resistance (By similarity).</text>
</comment>
<comment type="catalytic activity">
    <reaction>
        <text>beta-D-GlcNAc-(1-&gt;4)-Mur2Ac(oyl-L-Ala-D-isoglutaminyl-L-Lys-D-Ala-D-Ala)-di-trans,octa-cis-undecaprenyl diphosphate + glycyl-tRNA(Gly) = beta-D-GlcNAc-(1-&gt;4)-Mur2Ac(oyl-L-Ala-D-isoglutaminyl-L-Lys-(N(6)-Gly)-D-Ala-D-Ala)-di-trans,octa-cis-undecaprenyl diphosphate + tRNA(Gly) + H(+)</text>
        <dbReference type="Rhea" id="RHEA:30435"/>
        <dbReference type="Rhea" id="RHEA-COMP:9664"/>
        <dbReference type="Rhea" id="RHEA-COMP:9683"/>
        <dbReference type="ChEBI" id="CHEBI:15378"/>
        <dbReference type="ChEBI" id="CHEBI:62233"/>
        <dbReference type="ChEBI" id="CHEBI:62234"/>
        <dbReference type="ChEBI" id="CHEBI:78442"/>
        <dbReference type="ChEBI" id="CHEBI:78522"/>
        <dbReference type="EC" id="2.3.2.16"/>
    </reaction>
</comment>
<comment type="subunit">
    <text evidence="1">Monomer.</text>
</comment>
<comment type="subcellular location">
    <subcellularLocation>
        <location evidence="2">Cytoplasm</location>
    </subcellularLocation>
</comment>
<comment type="similarity">
    <text evidence="2">Belongs to the FemABX family.</text>
</comment>
<dbReference type="EC" id="2.3.2.16"/>
<dbReference type="EMBL" id="BX571856">
    <property type="protein sequence ID" value="CAG41327.1"/>
    <property type="molecule type" value="Genomic_DNA"/>
</dbReference>
<dbReference type="RefSeq" id="WP_000413875.1">
    <property type="nucleotide sequence ID" value="NC_002952.2"/>
</dbReference>
<dbReference type="SMR" id="Q6GEH2"/>
<dbReference type="KEGG" id="sar:SAR2346"/>
<dbReference type="HOGENOM" id="CLU_048411_0_1_9"/>
<dbReference type="Proteomes" id="UP000000596">
    <property type="component" value="Chromosome"/>
</dbReference>
<dbReference type="GO" id="GO:0005737">
    <property type="term" value="C:cytoplasm"/>
    <property type="evidence" value="ECO:0007669"/>
    <property type="project" value="UniProtKB-SubCell"/>
</dbReference>
<dbReference type="GO" id="GO:0016755">
    <property type="term" value="F:aminoacyltransferase activity"/>
    <property type="evidence" value="ECO:0007669"/>
    <property type="project" value="InterPro"/>
</dbReference>
<dbReference type="GO" id="GO:0071555">
    <property type="term" value="P:cell wall organization"/>
    <property type="evidence" value="ECO:0007669"/>
    <property type="project" value="UniProtKB-KW"/>
</dbReference>
<dbReference type="GO" id="GO:0009252">
    <property type="term" value="P:peptidoglycan biosynthetic process"/>
    <property type="evidence" value="ECO:0007669"/>
    <property type="project" value="UniProtKB-KW"/>
</dbReference>
<dbReference type="GO" id="GO:0008360">
    <property type="term" value="P:regulation of cell shape"/>
    <property type="evidence" value="ECO:0007669"/>
    <property type="project" value="UniProtKB-KW"/>
</dbReference>
<dbReference type="GO" id="GO:0046677">
    <property type="term" value="P:response to antibiotic"/>
    <property type="evidence" value="ECO:0007669"/>
    <property type="project" value="UniProtKB-KW"/>
</dbReference>
<dbReference type="Gene3D" id="1.20.58.90">
    <property type="match status" value="1"/>
</dbReference>
<dbReference type="Gene3D" id="3.40.630.30">
    <property type="match status" value="2"/>
</dbReference>
<dbReference type="InterPro" id="IPR016181">
    <property type="entry name" value="Acyl_CoA_acyltransferase"/>
</dbReference>
<dbReference type="InterPro" id="IPR003447">
    <property type="entry name" value="FEMABX"/>
</dbReference>
<dbReference type="InterPro" id="IPR050644">
    <property type="entry name" value="PG_Glycine_Bridge_Synth"/>
</dbReference>
<dbReference type="PANTHER" id="PTHR36174">
    <property type="entry name" value="LIPID II:GLYCINE GLYCYLTRANSFERASE"/>
    <property type="match status" value="1"/>
</dbReference>
<dbReference type="PANTHER" id="PTHR36174:SF1">
    <property type="entry name" value="LIPID II:GLYCINE GLYCYLTRANSFERASE"/>
    <property type="match status" value="1"/>
</dbReference>
<dbReference type="Pfam" id="PF02388">
    <property type="entry name" value="FemAB"/>
    <property type="match status" value="1"/>
</dbReference>
<dbReference type="SUPFAM" id="SSF55729">
    <property type="entry name" value="Acyl-CoA N-acyltransferases (Nat)"/>
    <property type="match status" value="2"/>
</dbReference>
<dbReference type="PROSITE" id="PS51191">
    <property type="entry name" value="FEMABX"/>
    <property type="match status" value="1"/>
</dbReference>
<reference key="1">
    <citation type="journal article" date="2004" name="Proc. Natl. Acad. Sci. U.S.A.">
        <title>Complete genomes of two clinical Staphylococcus aureus strains: evidence for the rapid evolution of virulence and drug resistance.</title>
        <authorList>
            <person name="Holden M.T.G."/>
            <person name="Feil E.J."/>
            <person name="Lindsay J.A."/>
            <person name="Peacock S.J."/>
            <person name="Day N.P.J."/>
            <person name="Enright M.C."/>
            <person name="Foster T.J."/>
            <person name="Moore C.E."/>
            <person name="Hurst L."/>
            <person name="Atkin R."/>
            <person name="Barron A."/>
            <person name="Bason N."/>
            <person name="Bentley S.D."/>
            <person name="Chillingworth C."/>
            <person name="Chillingworth T."/>
            <person name="Churcher C."/>
            <person name="Clark L."/>
            <person name="Corton C."/>
            <person name="Cronin A."/>
            <person name="Doggett J."/>
            <person name="Dowd L."/>
            <person name="Feltwell T."/>
            <person name="Hance Z."/>
            <person name="Harris B."/>
            <person name="Hauser H."/>
            <person name="Holroyd S."/>
            <person name="Jagels K."/>
            <person name="James K.D."/>
            <person name="Lennard N."/>
            <person name="Line A."/>
            <person name="Mayes R."/>
            <person name="Moule S."/>
            <person name="Mungall K."/>
            <person name="Ormond D."/>
            <person name="Quail M.A."/>
            <person name="Rabbinowitsch E."/>
            <person name="Rutherford K.M."/>
            <person name="Sanders M."/>
            <person name="Sharp S."/>
            <person name="Simmonds M."/>
            <person name="Stevens K."/>
            <person name="Whitehead S."/>
            <person name="Barrell B.G."/>
            <person name="Spratt B.G."/>
            <person name="Parkhill J."/>
        </authorList>
    </citation>
    <scope>NUCLEOTIDE SEQUENCE [LARGE SCALE GENOMIC DNA]</scope>
    <source>
        <strain>MRSA252</strain>
    </source>
</reference>
<feature type="chain" id="PRO_0000236173" description="Lipid II:glycine glycyltransferase">
    <location>
        <begin position="1"/>
        <end position="421"/>
    </location>
</feature>
<accession>Q6GEH2</accession>
<keyword id="KW-0012">Acyltransferase</keyword>
<keyword id="KW-0046">Antibiotic resistance</keyword>
<keyword id="KW-0133">Cell shape</keyword>
<keyword id="KW-0961">Cell wall biogenesis/degradation</keyword>
<keyword id="KW-0963">Cytoplasm</keyword>
<keyword id="KW-0573">Peptidoglycan synthesis</keyword>
<keyword id="KW-0808">Transferase</keyword>
<organism>
    <name type="scientific">Staphylococcus aureus (strain MRSA252)</name>
    <dbReference type="NCBI Taxonomy" id="282458"/>
    <lineage>
        <taxon>Bacteria</taxon>
        <taxon>Bacillati</taxon>
        <taxon>Bacillota</taxon>
        <taxon>Bacilli</taxon>
        <taxon>Bacillales</taxon>
        <taxon>Staphylococcaceae</taxon>
        <taxon>Staphylococcus</taxon>
    </lineage>
</organism>
<sequence length="421" mass="48513">MEKMHITNQEHDAFVKSNPNGDLLQLTKWAETKKLTGWYARRIAVGRDGEIQGVAQLLFKKVPKLPYTLCYISRGFVVDYSNKEALNALLDSAKEIAKAEKAYAIKIDPDVEVDKGTDALQNLKALGFKHKGFKEGLSKDYIQPRMTMITPIDKNDDELLNSFERRNRSKVRLALKRGTTVERSDREGLKTFAELMKITGERDGFLTRDISYFENIYDALHEDGDAELFLVKLDPKENIAKVNQELNELHAEIAKWQQKMETSEKQAKKAQNMINDAQNKIAKNEDLKRDLEALEKEHPEGIYLSGALLMFAGSKSYYLYGASSNEFRDFLPNHHMQYTMMKYAREHGATTYDFGGTDNDPDKDSEHYGLWAFKKVWGTYLSEKIGEFDYVLNQPLYQLIEQVKPRLTKAKIKISRKLKRK</sequence>